<proteinExistence type="evidence at transcript level"/>
<evidence type="ECO:0000256" key="1">
    <source>
        <dbReference type="SAM" id="MobiDB-lite"/>
    </source>
</evidence>
<evidence type="ECO:0000305" key="2"/>
<name>F124A_XENLA</name>
<accession>Q6GQ34</accession>
<dbReference type="EMBL" id="BC072914">
    <property type="protein sequence ID" value="AAH72914.1"/>
    <property type="molecule type" value="mRNA"/>
</dbReference>
<dbReference type="RefSeq" id="NP_001085546.1">
    <property type="nucleotide sequence ID" value="NM_001092077.1"/>
</dbReference>
<dbReference type="SMR" id="Q6GQ34"/>
<dbReference type="DNASU" id="443972"/>
<dbReference type="GeneID" id="443972"/>
<dbReference type="KEGG" id="xla:443972"/>
<dbReference type="AGR" id="Xenbase:XB-GENE-5763905"/>
<dbReference type="CTD" id="443972"/>
<dbReference type="Xenbase" id="XB-GENE-5763905">
    <property type="gene designation" value="fam124a.L"/>
</dbReference>
<dbReference type="OrthoDB" id="10023686at2759"/>
<dbReference type="Proteomes" id="UP000186698">
    <property type="component" value="Chromosome 2L"/>
</dbReference>
<dbReference type="Bgee" id="443972">
    <property type="expression patterns" value="Expressed in internal ear and 14 other cell types or tissues"/>
</dbReference>
<dbReference type="InterPro" id="IPR029380">
    <property type="entry name" value="FAM124"/>
</dbReference>
<dbReference type="InterPro" id="IPR046365">
    <property type="entry name" value="FAM124_dom"/>
</dbReference>
<dbReference type="PANTHER" id="PTHR14715">
    <property type="entry name" value="FAM124 DOMAIN-CONTAINING PROTEIN-RELATED"/>
    <property type="match status" value="1"/>
</dbReference>
<dbReference type="PANTHER" id="PTHR14715:SF4">
    <property type="entry name" value="PROTEIN FAM124A"/>
    <property type="match status" value="1"/>
</dbReference>
<dbReference type="Pfam" id="PF15067">
    <property type="entry name" value="FAM124"/>
    <property type="match status" value="1"/>
</dbReference>
<feature type="chain" id="PRO_0000286382" description="Protein FAM124A">
    <location>
        <begin position="1"/>
        <end position="520"/>
    </location>
</feature>
<feature type="region of interest" description="Disordered" evidence="1">
    <location>
        <begin position="1"/>
        <end position="34"/>
    </location>
</feature>
<feature type="region of interest" description="Disordered" evidence="1">
    <location>
        <begin position="311"/>
        <end position="334"/>
    </location>
</feature>
<feature type="compositionally biased region" description="Low complexity" evidence="1">
    <location>
        <begin position="20"/>
        <end position="32"/>
    </location>
</feature>
<reference key="1">
    <citation type="submission" date="2004-06" db="EMBL/GenBank/DDBJ databases">
        <authorList>
            <consortium name="NIH - Xenopus Gene Collection (XGC) project"/>
        </authorList>
    </citation>
    <scope>NUCLEOTIDE SEQUENCE [LARGE SCALE MRNA]</scope>
    <source>
        <tissue>Ovary</tissue>
    </source>
</reference>
<sequence>MDRKAGEDDWEDSGAETGGSDYSRLSSTSSELSVDDTQDPFLVSIHVITDPGESRCLQEAIDRLLAWIHPDLQLFRVSERRVSKKRKPVKSFVSHPALAIILFLQEAYGEDQILHLHKCFQKPPWQFHHTERVHGKFLPYMPCNQDFFTLANGTPLWAIRQVHYGKEIIRFTIYCSYENFADMMKMYELILKKRVWRKKTDFCVFPVYSNMDFDIEFSLKRLAKGQKPVPLESSLLEFRVRDFGQLIPLLPNQCSPISEGRWKTEDHDGNKILLQQAQCLARKTTWKHQNYLSRNPAMTQPLSIAPRNRKFKSGKHKGRAGNGQVQHFGGSQMDFPRGQTDTLRSLKVPSESVQPFQRSKSLYCLPTTSDFPSCDSFPISETHLCFGQETYETPVWRSSPRINIDDLEGVEETDVDTGMKLSSSDLSVISAYSPLNGLCSDLEASLPSHGALSHSNTLPYDSLHSLSHISSSSCSVFPSATGASTLTQAHILGHYHQSSETTSHLSETLNVQEEEEEFYI</sequence>
<comment type="similarity">
    <text evidence="2">Belongs to the FAM124 family.</text>
</comment>
<protein>
    <recommendedName>
        <fullName>Protein FAM124A</fullName>
    </recommendedName>
</protein>
<gene>
    <name type="primary">fam124a</name>
</gene>
<organism>
    <name type="scientific">Xenopus laevis</name>
    <name type="common">African clawed frog</name>
    <dbReference type="NCBI Taxonomy" id="8355"/>
    <lineage>
        <taxon>Eukaryota</taxon>
        <taxon>Metazoa</taxon>
        <taxon>Chordata</taxon>
        <taxon>Craniata</taxon>
        <taxon>Vertebrata</taxon>
        <taxon>Euteleostomi</taxon>
        <taxon>Amphibia</taxon>
        <taxon>Batrachia</taxon>
        <taxon>Anura</taxon>
        <taxon>Pipoidea</taxon>
        <taxon>Pipidae</taxon>
        <taxon>Xenopodinae</taxon>
        <taxon>Xenopus</taxon>
        <taxon>Xenopus</taxon>
    </lineage>
</organism>
<keyword id="KW-1185">Reference proteome</keyword>